<keyword id="KW-0053">Apoptosis</keyword>
<keyword id="KW-0256">Endoplasmic reticulum</keyword>
<keyword id="KW-0472">Membrane</keyword>
<keyword id="KW-0496">Mitochondrion</keyword>
<keyword id="KW-1000">Mitochondrion outer membrane</keyword>
<keyword id="KW-0597">Phosphoprotein</keyword>
<keyword id="KW-1185">Reference proteome</keyword>
<keyword id="KW-0677">Repeat</keyword>
<keyword id="KW-0346">Stress response</keyword>
<keyword id="KW-0810">Translation regulation</keyword>
<keyword id="KW-0832">Ubl conjugation</keyword>
<protein>
    <recommendedName>
        <fullName>Protein phosphatase 1 regulatory subunit 15A</fullName>
    </recommendedName>
    <alternativeName>
        <fullName>Growth arrest and DNA damage-inducible protein GADD34</fullName>
    </alternativeName>
</protein>
<accession>Q2KI51</accession>
<name>PR15A_BOVIN</name>
<organism>
    <name type="scientific">Bos taurus</name>
    <name type="common">Bovine</name>
    <dbReference type="NCBI Taxonomy" id="9913"/>
    <lineage>
        <taxon>Eukaryota</taxon>
        <taxon>Metazoa</taxon>
        <taxon>Chordata</taxon>
        <taxon>Craniata</taxon>
        <taxon>Vertebrata</taxon>
        <taxon>Euteleostomi</taxon>
        <taxon>Mammalia</taxon>
        <taxon>Eutheria</taxon>
        <taxon>Laurasiatheria</taxon>
        <taxon>Artiodactyla</taxon>
        <taxon>Ruminantia</taxon>
        <taxon>Pecora</taxon>
        <taxon>Bovidae</taxon>
        <taxon>Bovinae</taxon>
        <taxon>Bos</taxon>
    </lineage>
</organism>
<feature type="chain" id="PRO_0000320516" description="Protein phosphatase 1 regulatory subunit 15A">
    <location>
        <begin position="1"/>
        <end position="670"/>
    </location>
</feature>
<feature type="topological domain" description="Cytoplasmic" evidence="2">
    <location>
        <begin position="1"/>
        <end position="21"/>
    </location>
</feature>
<feature type="intramembrane region" description="Helical" evidence="2">
    <location>
        <begin position="22"/>
        <end position="39"/>
    </location>
</feature>
<feature type="topological domain" description="Cytoplasmic" evidence="2">
    <location>
        <begin position="40"/>
        <end position="670"/>
    </location>
</feature>
<feature type="repeat" description="1">
    <location>
        <begin position="355"/>
        <end position="381"/>
    </location>
</feature>
<feature type="repeat" description="2">
    <location>
        <begin position="396"/>
        <end position="426"/>
    </location>
</feature>
<feature type="repeat" description="3">
    <location>
        <begin position="436"/>
        <end position="462"/>
    </location>
</feature>
<feature type="repeat" description="4">
    <location>
        <begin position="478"/>
        <end position="511"/>
    </location>
</feature>
<feature type="region of interest" description="Required for localization in the endoplasmic reticulum" evidence="2">
    <location>
        <begin position="1"/>
        <end position="60"/>
    </location>
</feature>
<feature type="region of interest" description="Disordered" evidence="3">
    <location>
        <begin position="76"/>
        <end position="144"/>
    </location>
</feature>
<feature type="region of interest" description="Disordered" evidence="3">
    <location>
        <begin position="159"/>
        <end position="178"/>
    </location>
</feature>
<feature type="region of interest" description="Disordered" evidence="3">
    <location>
        <begin position="191"/>
        <end position="501"/>
    </location>
</feature>
<feature type="region of interest" description="4 X 34 AA approximate repeats">
    <location>
        <begin position="355"/>
        <end position="511"/>
    </location>
</feature>
<feature type="region of interest" description="Interaction with SMAD7" evidence="1">
    <location>
        <begin position="355"/>
        <end position="511"/>
    </location>
</feature>
<feature type="region of interest" description="Interaction with KMT2A/MLL1" evidence="1">
    <location>
        <begin position="484"/>
        <end position="556"/>
    </location>
</feature>
<feature type="region of interest" description="Interaction with SMARCB1" evidence="1">
    <location>
        <begin position="537"/>
        <end position="584"/>
    </location>
</feature>
<feature type="region of interest" description="Disordered" evidence="3">
    <location>
        <begin position="622"/>
        <end position="670"/>
    </location>
</feature>
<feature type="compositionally biased region" description="Basic and acidic residues" evidence="3">
    <location>
        <begin position="78"/>
        <end position="87"/>
    </location>
</feature>
<feature type="compositionally biased region" description="Acidic residues" evidence="3">
    <location>
        <begin position="191"/>
        <end position="202"/>
    </location>
</feature>
<feature type="compositionally biased region" description="Basic and acidic residues" evidence="3">
    <location>
        <begin position="254"/>
        <end position="265"/>
    </location>
</feature>
<feature type="compositionally biased region" description="Polar residues" evidence="3">
    <location>
        <begin position="271"/>
        <end position="288"/>
    </location>
</feature>
<feature type="compositionally biased region" description="Acidic residues" evidence="3">
    <location>
        <begin position="289"/>
        <end position="299"/>
    </location>
</feature>
<feature type="compositionally biased region" description="Polar residues" evidence="3">
    <location>
        <begin position="302"/>
        <end position="312"/>
    </location>
</feature>
<feature type="compositionally biased region" description="Acidic residues" evidence="3">
    <location>
        <begin position="321"/>
        <end position="344"/>
    </location>
</feature>
<feature type="compositionally biased region" description="Acidic residues" evidence="3">
    <location>
        <begin position="367"/>
        <end position="385"/>
    </location>
</feature>
<feature type="compositionally biased region" description="Polar residues" evidence="3">
    <location>
        <begin position="388"/>
        <end position="397"/>
    </location>
</feature>
<feature type="compositionally biased region" description="Acidic residues" evidence="3">
    <location>
        <begin position="407"/>
        <end position="425"/>
    </location>
</feature>
<feature type="compositionally biased region" description="Acidic residues" evidence="3">
    <location>
        <begin position="448"/>
        <end position="461"/>
    </location>
</feature>
<feature type="compositionally biased region" description="Basic and acidic residues" evidence="3">
    <location>
        <begin position="489"/>
        <end position="501"/>
    </location>
</feature>
<feature type="compositionally biased region" description="Polar residues" evidence="3">
    <location>
        <begin position="623"/>
        <end position="645"/>
    </location>
</feature>
<feature type="modified residue" description="Phosphotyrosine" evidence="2">
    <location>
        <position position="403"/>
    </location>
</feature>
<feature type="modified residue" description="Phosphotyrosine" evidence="2">
    <location>
        <position position="443"/>
    </location>
</feature>
<feature type="modified residue" description="Phosphotyrosine" evidence="2">
    <location>
        <position position="513"/>
    </location>
</feature>
<gene>
    <name type="primary">PPP1R15A</name>
    <name type="synonym">GADD34</name>
</gene>
<reference key="1">
    <citation type="submission" date="2006-01" db="EMBL/GenBank/DDBJ databases">
        <authorList>
            <consortium name="NIH - Mammalian Gene Collection (MGC) project"/>
        </authorList>
    </citation>
    <scope>NUCLEOTIDE SEQUENCE [LARGE SCALE MRNA]</scope>
    <source>
        <strain>Hereford</strain>
        <tissue>Heart ventricle</tissue>
    </source>
</reference>
<sequence>MAPGQMPHQPAPWRGTHPLFLLSPLMGLLSRAWSLLRAPGPPEPWLVEAVTEADQGGAGLEDEAKASLATYHALWGRHPQEETKDSGAAEEDREASPGACPNLEAKHSLPEAWGLSDDDDEKYGGEEATGVPREQKEFMDGQPAPLPLSLLIRSLPDLPGEEESKEEAVTGGGGNEVTAFSFPLSHWECCPGEEEEEEEENGEAVRVCRPVNGATEERTQTEAATKTSMSPSSVGSHLRAWECCSGKESEEEEKDKQAEKGDADPGPHFTSLAQRPSLRTWQHPSSAITEEEEDRDSEEMGASSSVPLTSAFLSDWVYQPEDTEEEDEEEEDCDSEATEDEGEAEVSSATPPPSAFLSAWVYRPGEDTEEEEDCDSEATEDEGEAEVSSATPPTSAFLSAWVYQPGDTEEEEDCDSEATEDEGEAEVSSATPPPSAFLSAWVYRPGEDTEEEDEYEDEDNESGAADLGPSPSLQTQSALLRDQIYQPGEKTDGGEAAEKWGEAESCPFRVAIYLPGEKPPPPWDPPRLPLRLQRRLKSAQTPTRHQDLERLLKTRKVRFSEKVSIHPLVVWAGPAQAARRGPWEQFARDRSRFARRIAQVQEELGPYLTPAARARAWARLGNPPTSLATVPAPTQTSPMTPIQATPLSHALASPSPPCVSPSLDLSGRRG</sequence>
<evidence type="ECO:0000250" key="1"/>
<evidence type="ECO:0000250" key="2">
    <source>
        <dbReference type="UniProtKB" id="O75807"/>
    </source>
</evidence>
<evidence type="ECO:0000256" key="3">
    <source>
        <dbReference type="SAM" id="MobiDB-lite"/>
    </source>
</evidence>
<evidence type="ECO:0000305" key="4"/>
<proteinExistence type="evidence at transcript level"/>
<comment type="function">
    <text evidence="2">Recruits the serine/threonine-protein phosphatase PPP1CA to prevents excessive phosphorylation of the translation initiation factor eIF-2A/EIF2S1, thereby reversing the shut-off of protein synthesis initiated by stress-inducible kinases and facilitating recovery of cells from stress. Down-regulates the TGF-beta signaling pathway by promoting dephosphorylation of TGFB1 by PP1. May promote apoptosis by inducing TP53 phosphorylation on 'Ser-15'. Plays an essential role in autophagy by tuning translation during starvation, thus enabling lysosomal biogenesis and a sustained autophagic flux.</text>
</comment>
<comment type="subunit">
    <text evidence="1 2">Interacts with PPP1CA. Interacts with EIF2S1 (By similarity). Interacts with PCNA (By similarity). Interacts with LYN and KMT2A/MLL1. Interacts with PPP1R1A and SMARCB1. Interacts with SMAD7. Interacts with BAG1. Interacts with NOX4 (By similarity).</text>
</comment>
<comment type="subcellular location">
    <subcellularLocation>
        <location>Endoplasmic reticulum membrane</location>
        <topology>Peripheral membrane protein</topology>
        <orientation evidence="2">Cytoplasmic side</orientation>
    </subcellularLocation>
    <subcellularLocation>
        <location>Mitochondrion outer membrane</location>
        <topology>Peripheral membrane protein</topology>
        <orientation evidence="2">Cytoplasmic side</orientation>
    </subcellularLocation>
    <text evidence="2">Associates with membranes via an N-terminal amphipathic intramembrane region.</text>
</comment>
<comment type="PTM">
    <text evidence="2">Phosphorylated on tyrosine by LYN; which impairs its antiproliferative activity.</text>
</comment>
<comment type="PTM">
    <text evidence="2">Polyubiquitinated. Exhibits a rapid proteasomal degradation with a half-life under 1 hour, ubiquitination depends on endoplasmic reticulum association.</text>
</comment>
<comment type="similarity">
    <text evidence="4">Belongs to the PPP1R15 family.</text>
</comment>
<dbReference type="EMBL" id="BC112768">
    <property type="protein sequence ID" value="AAI12769.2"/>
    <property type="molecule type" value="mRNA"/>
</dbReference>
<dbReference type="RefSeq" id="NP_001039643.1">
    <property type="nucleotide sequence ID" value="NM_001046178.2"/>
</dbReference>
<dbReference type="FunCoup" id="Q2KI51">
    <property type="interactions" value="151"/>
</dbReference>
<dbReference type="STRING" id="9913.ENSBTAP00000001702"/>
<dbReference type="PaxDb" id="9913-ENSBTAP00000001702"/>
<dbReference type="GeneID" id="514688"/>
<dbReference type="KEGG" id="bta:514688"/>
<dbReference type="CTD" id="23645"/>
<dbReference type="eggNOG" id="ENOG502S745">
    <property type="taxonomic scope" value="Eukaryota"/>
</dbReference>
<dbReference type="InParanoid" id="Q2KI51"/>
<dbReference type="OrthoDB" id="5976067at2759"/>
<dbReference type="Proteomes" id="UP000009136">
    <property type="component" value="Unplaced"/>
</dbReference>
<dbReference type="GO" id="GO:0005783">
    <property type="term" value="C:endoplasmic reticulum"/>
    <property type="evidence" value="ECO:0000318"/>
    <property type="project" value="GO_Central"/>
</dbReference>
<dbReference type="GO" id="GO:0005789">
    <property type="term" value="C:endoplasmic reticulum membrane"/>
    <property type="evidence" value="ECO:0007669"/>
    <property type="project" value="UniProtKB-SubCell"/>
</dbReference>
<dbReference type="GO" id="GO:0005741">
    <property type="term" value="C:mitochondrial outer membrane"/>
    <property type="evidence" value="ECO:0007669"/>
    <property type="project" value="UniProtKB-SubCell"/>
</dbReference>
<dbReference type="GO" id="GO:0000164">
    <property type="term" value="C:protein phosphatase type 1 complex"/>
    <property type="evidence" value="ECO:0000318"/>
    <property type="project" value="GO_Central"/>
</dbReference>
<dbReference type="GO" id="GO:0019888">
    <property type="term" value="F:protein phosphatase regulator activity"/>
    <property type="evidence" value="ECO:0000318"/>
    <property type="project" value="GO_Central"/>
</dbReference>
<dbReference type="GO" id="GO:0006915">
    <property type="term" value="P:apoptotic process"/>
    <property type="evidence" value="ECO:0007669"/>
    <property type="project" value="UniProtKB-KW"/>
</dbReference>
<dbReference type="GO" id="GO:0006417">
    <property type="term" value="P:regulation of translation"/>
    <property type="evidence" value="ECO:0007669"/>
    <property type="project" value="UniProtKB-KW"/>
</dbReference>
<dbReference type="GO" id="GO:0034976">
    <property type="term" value="P:response to endoplasmic reticulum stress"/>
    <property type="evidence" value="ECO:0000318"/>
    <property type="project" value="GO_Central"/>
</dbReference>
<dbReference type="InterPro" id="IPR051254">
    <property type="entry name" value="PPP1R15"/>
</dbReference>
<dbReference type="InterPro" id="IPR019523">
    <property type="entry name" value="Prot_Pase1_reg-su15A/B_C"/>
</dbReference>
<dbReference type="PANTHER" id="PTHR16489">
    <property type="entry name" value="GH11727P"/>
    <property type="match status" value="1"/>
</dbReference>
<dbReference type="PANTHER" id="PTHR16489:SF14">
    <property type="entry name" value="PROTEIN PHOSPHATASE 1 REGULATORY SUBUNIT 15A"/>
    <property type="match status" value="1"/>
</dbReference>
<dbReference type="Pfam" id="PF10488">
    <property type="entry name" value="PP1c_bdg"/>
    <property type="match status" value="1"/>
</dbReference>